<evidence type="ECO:0000255" key="1">
    <source>
        <dbReference type="HAMAP-Rule" id="MF_00651"/>
    </source>
</evidence>
<sequence length="151" mass="16975">MREKIAALGLDVGKKRVGVAGCDGLGLIATGLTTIERTHFIADVEKFKQLVEERDIKVLVVGLPYSMNGTLGSQAKQVQNYATRLAKALQLPLEYVDERLTSYEAEEQLKAQKRFSTYNKGLVDRQAAAIILQQWLDQRRSLRLIELEDNL</sequence>
<name>YQGF_GLOC7</name>
<reference key="1">
    <citation type="journal article" date="2011" name="MBio">
        <title>Novel metabolic attributes of the genus Cyanothece, comprising a group of unicellular nitrogen-fixing Cyanobacteria.</title>
        <authorList>
            <person name="Bandyopadhyay A."/>
            <person name="Elvitigala T."/>
            <person name="Welsh E."/>
            <person name="Stockel J."/>
            <person name="Liberton M."/>
            <person name="Min H."/>
            <person name="Sherman L.A."/>
            <person name="Pakrasi H.B."/>
        </authorList>
    </citation>
    <scope>NUCLEOTIDE SEQUENCE [LARGE SCALE GENOMIC DNA]</scope>
    <source>
        <strain>PCC 7424</strain>
    </source>
</reference>
<comment type="function">
    <text evidence="1">Could be a nuclease involved in processing of the 5'-end of pre-16S rRNA.</text>
</comment>
<comment type="subcellular location">
    <subcellularLocation>
        <location evidence="1">Cytoplasm</location>
    </subcellularLocation>
</comment>
<comment type="similarity">
    <text evidence="1">Belongs to the YqgF nuclease family.</text>
</comment>
<proteinExistence type="inferred from homology"/>
<accession>B7KBE4</accession>
<protein>
    <recommendedName>
        <fullName evidence="1">Putative pre-16S rRNA nuclease</fullName>
        <ecNumber evidence="1">3.1.-.-</ecNumber>
    </recommendedName>
</protein>
<dbReference type="EC" id="3.1.-.-" evidence="1"/>
<dbReference type="EMBL" id="CP001291">
    <property type="protein sequence ID" value="ACK71500.1"/>
    <property type="molecule type" value="Genomic_DNA"/>
</dbReference>
<dbReference type="RefSeq" id="WP_015955097.1">
    <property type="nucleotide sequence ID" value="NC_011729.1"/>
</dbReference>
<dbReference type="SMR" id="B7KBE4"/>
<dbReference type="STRING" id="65393.PCC7424_3098"/>
<dbReference type="KEGG" id="cyc:PCC7424_3098"/>
<dbReference type="eggNOG" id="COG0816">
    <property type="taxonomic scope" value="Bacteria"/>
</dbReference>
<dbReference type="HOGENOM" id="CLU_098240_3_1_3"/>
<dbReference type="OrthoDB" id="9796140at2"/>
<dbReference type="Proteomes" id="UP000002384">
    <property type="component" value="Chromosome"/>
</dbReference>
<dbReference type="GO" id="GO:0005829">
    <property type="term" value="C:cytosol"/>
    <property type="evidence" value="ECO:0007669"/>
    <property type="project" value="TreeGrafter"/>
</dbReference>
<dbReference type="GO" id="GO:0004518">
    <property type="term" value="F:nuclease activity"/>
    <property type="evidence" value="ECO:0007669"/>
    <property type="project" value="UniProtKB-KW"/>
</dbReference>
<dbReference type="GO" id="GO:0000967">
    <property type="term" value="P:rRNA 5'-end processing"/>
    <property type="evidence" value="ECO:0007669"/>
    <property type="project" value="UniProtKB-UniRule"/>
</dbReference>
<dbReference type="CDD" id="cd16964">
    <property type="entry name" value="YqgF"/>
    <property type="match status" value="1"/>
</dbReference>
<dbReference type="Gene3D" id="3.30.420.140">
    <property type="entry name" value="YqgF/RNase H-like domain"/>
    <property type="match status" value="1"/>
</dbReference>
<dbReference type="HAMAP" id="MF_00651">
    <property type="entry name" value="Nuclease_YqgF"/>
    <property type="match status" value="1"/>
</dbReference>
<dbReference type="InterPro" id="IPR012337">
    <property type="entry name" value="RNaseH-like_sf"/>
</dbReference>
<dbReference type="InterPro" id="IPR005227">
    <property type="entry name" value="YqgF"/>
</dbReference>
<dbReference type="InterPro" id="IPR006641">
    <property type="entry name" value="YqgF/RNaseH-like_dom"/>
</dbReference>
<dbReference type="InterPro" id="IPR037027">
    <property type="entry name" value="YqgF/RNaseH-like_dom_sf"/>
</dbReference>
<dbReference type="NCBIfam" id="TIGR00250">
    <property type="entry name" value="RNAse_H_YqgF"/>
    <property type="match status" value="1"/>
</dbReference>
<dbReference type="PANTHER" id="PTHR33317">
    <property type="entry name" value="POLYNUCLEOTIDYL TRANSFERASE, RIBONUCLEASE H-LIKE SUPERFAMILY PROTEIN"/>
    <property type="match status" value="1"/>
</dbReference>
<dbReference type="PANTHER" id="PTHR33317:SF4">
    <property type="entry name" value="POLYNUCLEOTIDYL TRANSFERASE, RIBONUCLEASE H-LIKE SUPERFAMILY PROTEIN"/>
    <property type="match status" value="1"/>
</dbReference>
<dbReference type="Pfam" id="PF03652">
    <property type="entry name" value="RuvX"/>
    <property type="match status" value="1"/>
</dbReference>
<dbReference type="SMART" id="SM00732">
    <property type="entry name" value="YqgFc"/>
    <property type="match status" value="1"/>
</dbReference>
<dbReference type="SUPFAM" id="SSF53098">
    <property type="entry name" value="Ribonuclease H-like"/>
    <property type="match status" value="1"/>
</dbReference>
<gene>
    <name type="ordered locus">PCC7424_3098</name>
</gene>
<feature type="chain" id="PRO_1000131021" description="Putative pre-16S rRNA nuclease">
    <location>
        <begin position="1"/>
        <end position="151"/>
    </location>
</feature>
<organism>
    <name type="scientific">Gloeothece citriformis (strain PCC 7424)</name>
    <name type="common">Cyanothece sp. (strain PCC 7424)</name>
    <dbReference type="NCBI Taxonomy" id="65393"/>
    <lineage>
        <taxon>Bacteria</taxon>
        <taxon>Bacillati</taxon>
        <taxon>Cyanobacteriota</taxon>
        <taxon>Cyanophyceae</taxon>
        <taxon>Oscillatoriophycideae</taxon>
        <taxon>Chroococcales</taxon>
        <taxon>Aphanothecaceae</taxon>
        <taxon>Gloeothece</taxon>
        <taxon>Gloeothece citriformis</taxon>
    </lineage>
</organism>
<keyword id="KW-0963">Cytoplasm</keyword>
<keyword id="KW-0378">Hydrolase</keyword>
<keyword id="KW-0540">Nuclease</keyword>
<keyword id="KW-1185">Reference proteome</keyword>
<keyword id="KW-0690">Ribosome biogenesis</keyword>